<accession>P14062</accession>
<comment type="function">
    <text evidence="1">Catalyzes the oxidative decarboxylation of 6-phosphogluconate to ribulose 5-phosphate and CO(2), with concomitant reduction of NADP to NADPH.</text>
</comment>
<comment type="catalytic activity">
    <reaction>
        <text>6-phospho-D-gluconate + NADP(+) = D-ribulose 5-phosphate + CO2 + NADPH</text>
        <dbReference type="Rhea" id="RHEA:10116"/>
        <dbReference type="ChEBI" id="CHEBI:16526"/>
        <dbReference type="ChEBI" id="CHEBI:57783"/>
        <dbReference type="ChEBI" id="CHEBI:58121"/>
        <dbReference type="ChEBI" id="CHEBI:58349"/>
        <dbReference type="ChEBI" id="CHEBI:58759"/>
        <dbReference type="EC" id="1.1.1.44"/>
    </reaction>
</comment>
<comment type="pathway">
    <text>Carbohydrate degradation; pentose phosphate pathway; D-ribulose 5-phosphate from D-glucose 6-phosphate (oxidative stage): step 3/3.</text>
</comment>
<comment type="subunit">
    <text evidence="1">Homodimer.</text>
</comment>
<comment type="similarity">
    <text evidence="2">Belongs to the 6-phosphogluconate dehydrogenase family.</text>
</comment>
<keyword id="KW-0311">Gluconate utilization</keyword>
<keyword id="KW-0521">NADP</keyword>
<keyword id="KW-0560">Oxidoreductase</keyword>
<keyword id="KW-0570">Pentose shunt</keyword>
<keyword id="KW-1185">Reference proteome</keyword>
<name>6PGD_SALTY</name>
<proteinExistence type="inferred from homology"/>
<protein>
    <recommendedName>
        <fullName>6-phosphogluconate dehydrogenase, decarboxylating</fullName>
        <ecNumber>1.1.1.44</ecNumber>
    </recommendedName>
</protein>
<dbReference type="EC" id="1.1.1.44"/>
<dbReference type="EMBL" id="X15651">
    <property type="protein sequence ID" value="CAA33677.1"/>
    <property type="molecule type" value="Genomic_DNA"/>
</dbReference>
<dbReference type="EMBL" id="M64332">
    <property type="protein sequence ID" value="AAA27137.1"/>
    <property type="molecule type" value="Genomic_DNA"/>
</dbReference>
<dbReference type="EMBL" id="AE006468">
    <property type="protein sequence ID" value="AAL20985.1"/>
    <property type="molecule type" value="Genomic_DNA"/>
</dbReference>
<dbReference type="EMBL" id="X56793">
    <property type="protein sequence ID" value="CAA40131.1"/>
    <property type="molecule type" value="Genomic_DNA"/>
</dbReference>
<dbReference type="PIR" id="S04397">
    <property type="entry name" value="S04397"/>
</dbReference>
<dbReference type="RefSeq" id="NP_461026.1">
    <property type="nucleotide sequence ID" value="NC_003197.2"/>
</dbReference>
<dbReference type="SMR" id="P14062"/>
<dbReference type="STRING" id="99287.STM2081"/>
<dbReference type="PaxDb" id="99287-STM2081"/>
<dbReference type="GeneID" id="1253602"/>
<dbReference type="KEGG" id="stm:STM2081"/>
<dbReference type="PATRIC" id="fig|99287.12.peg.2203"/>
<dbReference type="HOGENOM" id="CLU_024540_4_2_6"/>
<dbReference type="OMA" id="CVTHVGP"/>
<dbReference type="PhylomeDB" id="P14062"/>
<dbReference type="BioCyc" id="SENT99287:STM2081-MONOMER"/>
<dbReference type="UniPathway" id="UPA00115">
    <property type="reaction ID" value="UER00410"/>
</dbReference>
<dbReference type="Proteomes" id="UP000001014">
    <property type="component" value="Chromosome"/>
</dbReference>
<dbReference type="GO" id="GO:0005829">
    <property type="term" value="C:cytosol"/>
    <property type="evidence" value="ECO:0000318"/>
    <property type="project" value="GO_Central"/>
</dbReference>
<dbReference type="GO" id="GO:0050661">
    <property type="term" value="F:NADP binding"/>
    <property type="evidence" value="ECO:0000318"/>
    <property type="project" value="GO_Central"/>
</dbReference>
<dbReference type="GO" id="GO:0004616">
    <property type="term" value="F:phosphogluconate dehydrogenase (decarboxylating) activity"/>
    <property type="evidence" value="ECO:0000250"/>
    <property type="project" value="UniProtKB"/>
</dbReference>
<dbReference type="GO" id="GO:0019521">
    <property type="term" value="P:D-gluconate metabolic process"/>
    <property type="evidence" value="ECO:0007669"/>
    <property type="project" value="UniProtKB-KW"/>
</dbReference>
<dbReference type="GO" id="GO:0016054">
    <property type="term" value="P:organic acid catabolic process"/>
    <property type="evidence" value="ECO:0007669"/>
    <property type="project" value="UniProtKB-ARBA"/>
</dbReference>
<dbReference type="GO" id="GO:0006098">
    <property type="term" value="P:pentose-phosphate shunt"/>
    <property type="evidence" value="ECO:0000250"/>
    <property type="project" value="UniProtKB"/>
</dbReference>
<dbReference type="GO" id="GO:0009051">
    <property type="term" value="P:pentose-phosphate shunt, oxidative branch"/>
    <property type="evidence" value="ECO:0000318"/>
    <property type="project" value="GO_Central"/>
</dbReference>
<dbReference type="FunFam" id="1.10.1040.10:FF:000002">
    <property type="entry name" value="6-phosphogluconate dehydrogenase, decarboxylating"/>
    <property type="match status" value="1"/>
</dbReference>
<dbReference type="FunFam" id="1.20.5.320:FF:000001">
    <property type="entry name" value="6-phosphogluconate dehydrogenase, decarboxylating"/>
    <property type="match status" value="1"/>
</dbReference>
<dbReference type="FunFam" id="3.40.50.720:FF:000007">
    <property type="entry name" value="6-phosphogluconate dehydrogenase, decarboxylating"/>
    <property type="match status" value="1"/>
</dbReference>
<dbReference type="Gene3D" id="1.20.5.320">
    <property type="entry name" value="6-Phosphogluconate Dehydrogenase, domain 3"/>
    <property type="match status" value="1"/>
</dbReference>
<dbReference type="Gene3D" id="1.10.1040.10">
    <property type="entry name" value="N-(1-d-carboxylethyl)-l-norvaline Dehydrogenase, domain 2"/>
    <property type="match status" value="1"/>
</dbReference>
<dbReference type="Gene3D" id="3.40.50.720">
    <property type="entry name" value="NAD(P)-binding Rossmann-like Domain"/>
    <property type="match status" value="1"/>
</dbReference>
<dbReference type="InterPro" id="IPR008927">
    <property type="entry name" value="6-PGluconate_DH-like_C_sf"/>
</dbReference>
<dbReference type="InterPro" id="IPR013328">
    <property type="entry name" value="6PGD_dom2"/>
</dbReference>
<dbReference type="InterPro" id="IPR006114">
    <property type="entry name" value="6PGDH_C"/>
</dbReference>
<dbReference type="InterPro" id="IPR006113">
    <property type="entry name" value="6PGDH_Gnd/GntZ"/>
</dbReference>
<dbReference type="InterPro" id="IPR006115">
    <property type="entry name" value="6PGDH_NADP-bd"/>
</dbReference>
<dbReference type="InterPro" id="IPR006184">
    <property type="entry name" value="6PGdom_BS"/>
</dbReference>
<dbReference type="InterPro" id="IPR036291">
    <property type="entry name" value="NAD(P)-bd_dom_sf"/>
</dbReference>
<dbReference type="InterPro" id="IPR006183">
    <property type="entry name" value="Pgluconate_DH"/>
</dbReference>
<dbReference type="NCBIfam" id="TIGR00873">
    <property type="entry name" value="gnd"/>
    <property type="match status" value="1"/>
</dbReference>
<dbReference type="NCBIfam" id="NF006765">
    <property type="entry name" value="PRK09287.1"/>
    <property type="match status" value="1"/>
</dbReference>
<dbReference type="PANTHER" id="PTHR11811">
    <property type="entry name" value="6-PHOSPHOGLUCONATE DEHYDROGENASE"/>
    <property type="match status" value="1"/>
</dbReference>
<dbReference type="Pfam" id="PF00393">
    <property type="entry name" value="6PGD"/>
    <property type="match status" value="1"/>
</dbReference>
<dbReference type="Pfam" id="PF03446">
    <property type="entry name" value="NAD_binding_2"/>
    <property type="match status" value="1"/>
</dbReference>
<dbReference type="PIRSF" id="PIRSF000109">
    <property type="entry name" value="6PGD"/>
    <property type="match status" value="1"/>
</dbReference>
<dbReference type="PRINTS" id="PR00076">
    <property type="entry name" value="6PGDHDRGNASE"/>
</dbReference>
<dbReference type="SMART" id="SM01350">
    <property type="entry name" value="6PGD"/>
    <property type="match status" value="1"/>
</dbReference>
<dbReference type="SUPFAM" id="SSF48179">
    <property type="entry name" value="6-phosphogluconate dehydrogenase C-terminal domain-like"/>
    <property type="match status" value="1"/>
</dbReference>
<dbReference type="SUPFAM" id="SSF51735">
    <property type="entry name" value="NAD(P)-binding Rossmann-fold domains"/>
    <property type="match status" value="1"/>
</dbReference>
<dbReference type="PROSITE" id="PS00461">
    <property type="entry name" value="6PGD"/>
    <property type="match status" value="1"/>
</dbReference>
<organism>
    <name type="scientific">Salmonella typhimurium (strain LT2 / SGSC1412 / ATCC 700720)</name>
    <dbReference type="NCBI Taxonomy" id="99287"/>
    <lineage>
        <taxon>Bacteria</taxon>
        <taxon>Pseudomonadati</taxon>
        <taxon>Pseudomonadota</taxon>
        <taxon>Gammaproteobacteria</taxon>
        <taxon>Enterobacterales</taxon>
        <taxon>Enterobacteriaceae</taxon>
        <taxon>Salmonella</taxon>
    </lineage>
</organism>
<feature type="chain" id="PRO_0000090047" description="6-phosphogluconate dehydrogenase, decarboxylating">
    <location>
        <begin position="1"/>
        <end position="468"/>
    </location>
</feature>
<feature type="active site" description="Proton acceptor" evidence="1">
    <location>
        <position position="183"/>
    </location>
</feature>
<feature type="active site" description="Proton donor" evidence="1">
    <location>
        <position position="190"/>
    </location>
</feature>
<feature type="binding site" evidence="1">
    <location>
        <begin position="10"/>
        <end position="15"/>
    </location>
    <ligand>
        <name>NADP(+)</name>
        <dbReference type="ChEBI" id="CHEBI:58349"/>
    </ligand>
</feature>
<feature type="binding site" evidence="1">
    <location>
        <begin position="33"/>
        <end position="35"/>
    </location>
    <ligand>
        <name>NADP(+)</name>
        <dbReference type="ChEBI" id="CHEBI:58349"/>
    </ligand>
</feature>
<feature type="binding site" evidence="1">
    <location>
        <begin position="74"/>
        <end position="76"/>
    </location>
    <ligand>
        <name>NADP(+)</name>
        <dbReference type="ChEBI" id="CHEBI:58349"/>
    </ligand>
</feature>
<feature type="binding site" evidence="1">
    <location>
        <position position="102"/>
    </location>
    <ligand>
        <name>NADP(+)</name>
        <dbReference type="ChEBI" id="CHEBI:58349"/>
    </ligand>
</feature>
<feature type="binding site" description="in other chain" evidence="1">
    <location>
        <position position="102"/>
    </location>
    <ligand>
        <name>substrate</name>
        <note>ligand shared between dimeric partners</note>
    </ligand>
</feature>
<feature type="binding site" description="in other chain" evidence="1">
    <location>
        <begin position="128"/>
        <end position="130"/>
    </location>
    <ligand>
        <name>substrate</name>
        <note>ligand shared between dimeric partners</note>
    </ligand>
</feature>
<feature type="binding site" description="in other chain" evidence="1">
    <location>
        <begin position="186"/>
        <end position="187"/>
    </location>
    <ligand>
        <name>substrate</name>
        <note>ligand shared between dimeric partners</note>
    </ligand>
</feature>
<feature type="binding site" description="in other chain" evidence="1">
    <location>
        <position position="191"/>
    </location>
    <ligand>
        <name>substrate</name>
        <note>ligand shared between dimeric partners</note>
    </ligand>
</feature>
<feature type="binding site" description="in other chain" evidence="1">
    <location>
        <position position="260"/>
    </location>
    <ligand>
        <name>substrate</name>
        <note>ligand shared between dimeric partners</note>
    </ligand>
</feature>
<feature type="binding site" description="in other chain" evidence="1">
    <location>
        <position position="287"/>
    </location>
    <ligand>
        <name>substrate</name>
        <note>ligand shared between dimeric partners</note>
    </ligand>
</feature>
<feature type="binding site" evidence="1">
    <location>
        <position position="445"/>
    </location>
    <ligand>
        <name>substrate</name>
        <note>ligand shared between dimeric partners</note>
    </ligand>
</feature>
<feature type="binding site" evidence="1">
    <location>
        <position position="451"/>
    </location>
    <ligand>
        <name>substrate</name>
        <note>ligand shared between dimeric partners</note>
    </ligand>
</feature>
<sequence length="468" mass="51395">MSKQQIGVVGMAVMGRNLALNIESRGYTVSVFNRSREKTEEVIAENPGKKLVPYYTVKEFVESLETPRRILLMVKAGAGTDAAIDSLKPYLEKGDIIIDGGNTFFQDTIRRNRELSAEGFNFIGTGVSGGEEGALKGPSIMPGGQKDAYELVAPILTKIAAVAEDGEPCVTYIGADGAGHYVKMVHNGIEYGDMQLIAEAYSLLKGGLNLSNEELANTFTEWNNGELSSYLIDITKDIFTKKDEDGNYLVDVILDEAANKGTGKWTSQSALDLGEPLSLITESVFARYISSLKAQRVAASKVLSGPKAQPAGDKAEFIEKVRRALYLGKIVSYAQGFSQLRAASDEYHWDLNYGEIAKIFRAGCIIRAQFLQKITDAYAENADIANLLLAPYFKKIADEYQQALRDVVAYAVQNGIPVPTFSAAVAYYDSYRAAVLPANLIQAQRDYFGAHTYKRTDKEGIFHTEWLE</sequence>
<gene>
    <name type="primary">gnd</name>
    <name type="ordered locus">STM2081</name>
</gene>
<reference key="1">
    <citation type="journal article" date="1989" name="Mol. Gen. Genet.">
        <title>Cloning and nucleotide sequence of the Salmonella typhimurium LT2 gnd gene and its homology with the corresponding sequence of Escherichia coli K12.</title>
        <authorList>
            <person name="Reeves P."/>
            <person name="Stevenson G."/>
        </authorList>
    </citation>
    <scope>NUCLEOTIDE SEQUENCE [GENOMIC DNA]</scope>
    <source>
        <strain>LT2</strain>
    </source>
</reference>
<reference key="2">
    <citation type="journal article" date="1991" name="J. Bacteriol.">
        <title>Recombination in Escherichia coli and the definition of biological species.</title>
        <authorList>
            <person name="Dykhuizen D.E."/>
            <person name="Green L."/>
        </authorList>
    </citation>
    <scope>NUCLEOTIDE SEQUENCE [GENOMIC DNA]</scope>
    <source>
        <strain>LT2</strain>
    </source>
</reference>
<reference key="3">
    <citation type="journal article" date="2001" name="Nature">
        <title>Complete genome sequence of Salmonella enterica serovar Typhimurium LT2.</title>
        <authorList>
            <person name="McClelland M."/>
            <person name="Sanderson K.E."/>
            <person name="Spieth J."/>
            <person name="Clifton S.W."/>
            <person name="Latreille P."/>
            <person name="Courtney L."/>
            <person name="Porwollik S."/>
            <person name="Ali J."/>
            <person name="Dante M."/>
            <person name="Du F."/>
            <person name="Hou S."/>
            <person name="Layman D."/>
            <person name="Leonard S."/>
            <person name="Nguyen C."/>
            <person name="Scott K."/>
            <person name="Holmes A."/>
            <person name="Grewal N."/>
            <person name="Mulvaney E."/>
            <person name="Ryan E."/>
            <person name="Sun H."/>
            <person name="Florea L."/>
            <person name="Miller W."/>
            <person name="Stoneking T."/>
            <person name="Nhan M."/>
            <person name="Waterston R."/>
            <person name="Wilson R.K."/>
        </authorList>
    </citation>
    <scope>NUCLEOTIDE SEQUENCE [LARGE SCALE GENOMIC DNA]</scope>
    <source>
        <strain>LT2 / SGSC1412 / ATCC 700720</strain>
    </source>
</reference>
<reference key="4">
    <citation type="journal article" date="1991" name="Mol. Microbiol.">
        <title>Structure and sequence of the rfb (O antigen) gene cluster of Salmonella serovar typhimurium (strain LT2).</title>
        <authorList>
            <person name="Jiang X.-M."/>
            <person name="Neal B."/>
            <person name="Santiago F."/>
            <person name="Lee S.J."/>
            <person name="Romana L.K."/>
            <person name="Reeves P.R."/>
        </authorList>
    </citation>
    <scope>NUCLEOTIDE SEQUENCE [GENOMIC DNA] OF 1-57</scope>
    <source>
        <strain>LT2</strain>
    </source>
</reference>
<evidence type="ECO:0000250" key="1"/>
<evidence type="ECO:0000305" key="2"/>